<organism>
    <name type="scientific">Saccharomyces cerevisiae (strain ATCC 204508 / S288c)</name>
    <name type="common">Baker's yeast</name>
    <dbReference type="NCBI Taxonomy" id="559292"/>
    <lineage>
        <taxon>Eukaryota</taxon>
        <taxon>Fungi</taxon>
        <taxon>Dikarya</taxon>
        <taxon>Ascomycota</taxon>
        <taxon>Saccharomycotina</taxon>
        <taxon>Saccharomycetes</taxon>
        <taxon>Saccharomycetales</taxon>
        <taxon>Saccharomycetaceae</taxon>
        <taxon>Saccharomyces</taxon>
    </lineage>
</organism>
<name>PHSG_YEAST</name>
<feature type="initiator methionine" description="Removed" evidence="3">
    <location>
        <position position="1"/>
    </location>
</feature>
<feature type="chain" id="PRO_0000188545" description="Glycogen phosphorylase">
    <location>
        <begin position="2"/>
        <end position="902"/>
    </location>
</feature>
<feature type="region of interest" description="Disordered" evidence="1">
    <location>
        <begin position="1"/>
        <end position="21"/>
    </location>
</feature>
<feature type="modified residue" description="Phosphothreonine" evidence="2 3 8 9 10 11">
    <location>
        <position position="31"/>
    </location>
</feature>
<feature type="modified residue" description="Phosphoserine" evidence="10 11">
    <location>
        <position position="333"/>
    </location>
</feature>
<feature type="modified residue" description="N6-(pyridoxal phosphate)lysine">
    <location>
        <position position="751"/>
    </location>
</feature>
<feature type="sequence conflict" description="In Ref. 1; CAA28273 and 2; AAB59313." evidence="7" ref="1 2">
    <original>DL</original>
    <variation>EG</variation>
    <location>
        <begin position="167"/>
        <end position="168"/>
    </location>
</feature>
<feature type="sequence conflict" description="In Ref. 1; CAA28273 and 2; AAB59313." evidence="7" ref="1 2">
    <original>A</original>
    <variation>P</variation>
    <location>
        <position position="326"/>
    </location>
</feature>
<feature type="sequence conflict" description="In Ref. 1; CAA28273 and 2; AAB59313." evidence="7" ref="1 2">
    <original>VG</original>
    <variation>RR</variation>
    <location>
        <begin position="440"/>
        <end position="441"/>
    </location>
</feature>
<feature type="sequence conflict" description="In Ref. 1; CAA28273 and 2; AAB59313." evidence="7" ref="1 2">
    <original>A</original>
    <variation>V</variation>
    <location>
        <position position="508"/>
    </location>
</feature>
<feature type="sequence conflict" description="In Ref. 1; CAA28273 and 2; AAB59313." evidence="7" ref="1 2">
    <original>V</original>
    <variation>I</variation>
    <location>
        <position position="524"/>
    </location>
</feature>
<feature type="sequence conflict" description="In Ref. 1; CAA28273 and 2; AAB59313." evidence="7" ref="1 2">
    <original>G</original>
    <variation>E</variation>
    <location>
        <position position="578"/>
    </location>
</feature>
<feature type="sequence conflict" description="In Ref. 1; CAA28273 and 2; AAB59313." evidence="7" ref="1 2">
    <original>V</original>
    <variation>L</variation>
    <location>
        <position position="876"/>
    </location>
</feature>
<feature type="helix" evidence="12">
    <location>
        <begin position="35"/>
        <end position="44"/>
    </location>
</feature>
<feature type="helix" evidence="12">
    <location>
        <begin position="47"/>
        <end position="55"/>
    </location>
</feature>
<feature type="helix" evidence="12">
    <location>
        <begin position="64"/>
        <end position="76"/>
    </location>
</feature>
<feature type="helix" evidence="12">
    <location>
        <begin position="83"/>
        <end position="85"/>
    </location>
</feature>
<feature type="helix" evidence="12">
    <location>
        <begin position="88"/>
        <end position="117"/>
    </location>
</feature>
<feature type="strand" evidence="12">
    <location>
        <begin position="121"/>
        <end position="125"/>
    </location>
</feature>
<feature type="helix" evidence="12">
    <location>
        <begin position="134"/>
        <end position="140"/>
    </location>
</feature>
<feature type="helix" evidence="12">
    <location>
        <begin position="158"/>
        <end position="168"/>
    </location>
</feature>
<feature type="helix" evidence="12">
    <location>
        <begin position="172"/>
        <end position="176"/>
    </location>
</feature>
<feature type="helix" evidence="12">
    <location>
        <begin position="188"/>
        <end position="202"/>
    </location>
</feature>
<feature type="strand" evidence="12">
    <location>
        <begin position="207"/>
        <end position="212"/>
    </location>
</feature>
<feature type="strand" evidence="12">
    <location>
        <begin position="220"/>
        <end position="224"/>
    </location>
</feature>
<feature type="strand" evidence="12">
    <location>
        <begin position="227"/>
        <end position="231"/>
    </location>
</feature>
<feature type="turn" evidence="12">
    <location>
        <begin position="235"/>
        <end position="238"/>
    </location>
</feature>
<feature type="strand" evidence="12">
    <location>
        <begin position="244"/>
        <end position="256"/>
    </location>
</feature>
<feature type="strand" evidence="12">
    <location>
        <begin position="258"/>
        <end position="260"/>
    </location>
</feature>
<feature type="strand" evidence="12">
    <location>
        <begin position="273"/>
        <end position="275"/>
    </location>
</feature>
<feature type="strand" evidence="12">
    <location>
        <begin position="277"/>
        <end position="290"/>
    </location>
</feature>
<feature type="strand" evidence="12">
    <location>
        <begin position="297"/>
        <end position="308"/>
    </location>
</feature>
<feature type="helix" evidence="12">
    <location>
        <begin position="313"/>
        <end position="317"/>
    </location>
</feature>
<feature type="helix" evidence="12">
    <location>
        <begin position="321"/>
        <end position="324"/>
    </location>
</feature>
<feature type="helix" evidence="12">
    <location>
        <begin position="326"/>
        <end position="336"/>
    </location>
</feature>
<feature type="strand" evidence="12">
    <location>
        <begin position="337"/>
        <end position="339"/>
    </location>
</feature>
<feature type="helix" evidence="12">
    <location>
        <begin position="345"/>
        <end position="372"/>
    </location>
</feature>
<feature type="helix" evidence="12">
    <location>
        <begin position="377"/>
        <end position="379"/>
    </location>
</feature>
<feature type="helix" evidence="12">
    <location>
        <begin position="380"/>
        <end position="383"/>
    </location>
</feature>
<feature type="strand" evidence="12">
    <location>
        <begin position="384"/>
        <end position="391"/>
    </location>
</feature>
<feature type="turn" evidence="12">
    <location>
        <begin position="392"/>
        <end position="394"/>
    </location>
</feature>
<feature type="helix" evidence="12">
    <location>
        <begin position="395"/>
        <end position="406"/>
    </location>
</feature>
<feature type="helix" evidence="12">
    <location>
        <begin position="412"/>
        <end position="422"/>
    </location>
</feature>
<feature type="strand" evidence="12">
    <location>
        <begin position="423"/>
        <end position="427"/>
    </location>
</feature>
<feature type="helix" evidence="12">
    <location>
        <begin position="432"/>
        <end position="434"/>
    </location>
</feature>
<feature type="strand" evidence="12">
    <location>
        <begin position="437"/>
        <end position="439"/>
    </location>
</feature>
<feature type="helix" evidence="12">
    <location>
        <begin position="440"/>
        <end position="446"/>
    </location>
</feature>
<feature type="helix" evidence="12">
    <location>
        <begin position="448"/>
        <end position="468"/>
    </location>
</feature>
<feature type="helix" evidence="12">
    <location>
        <begin position="474"/>
        <end position="479"/>
    </location>
</feature>
<feature type="strand" evidence="12">
    <location>
        <begin position="481"/>
        <end position="483"/>
    </location>
</feature>
<feature type="strand" evidence="12">
    <location>
        <begin position="486"/>
        <end position="488"/>
    </location>
</feature>
<feature type="strand" evidence="12">
    <location>
        <begin position="490"/>
        <end position="492"/>
    </location>
</feature>
<feature type="helix" evidence="12">
    <location>
        <begin position="493"/>
        <end position="500"/>
    </location>
</feature>
<feature type="strand" evidence="12">
    <location>
        <begin position="501"/>
        <end position="508"/>
    </location>
</feature>
<feature type="helix" evidence="12">
    <location>
        <begin position="509"/>
        <end position="517"/>
    </location>
</feature>
<feature type="turn" evidence="12">
    <location>
        <begin position="518"/>
        <end position="520"/>
    </location>
</feature>
<feature type="helix" evidence="12">
    <location>
        <begin position="521"/>
        <end position="527"/>
    </location>
</feature>
<feature type="helix" evidence="12">
    <location>
        <begin position="529"/>
        <end position="531"/>
    </location>
</feature>
<feature type="strand" evidence="12">
    <location>
        <begin position="532"/>
        <end position="534"/>
    </location>
</feature>
<feature type="helix" evidence="12">
    <location>
        <begin position="541"/>
        <end position="544"/>
    </location>
</feature>
<feature type="turn" evidence="12">
    <location>
        <begin position="545"/>
        <end position="548"/>
    </location>
</feature>
<feature type="helix" evidence="12">
    <location>
        <begin position="550"/>
        <end position="559"/>
    </location>
</feature>
<feature type="helix" evidence="12">
    <location>
        <begin position="566"/>
        <end position="568"/>
    </location>
</feature>
<feature type="helix" evidence="12">
    <location>
        <begin position="571"/>
        <end position="582"/>
    </location>
</feature>
<feature type="helix" evidence="12">
    <location>
        <begin position="585"/>
        <end position="607"/>
    </location>
</feature>
<feature type="turn" evidence="12">
    <location>
        <begin position="608"/>
        <end position="611"/>
    </location>
</feature>
<feature type="helix" evidence="12">
    <location>
        <begin position="620"/>
        <end position="622"/>
    </location>
</feature>
<feature type="strand" evidence="12">
    <location>
        <begin position="624"/>
        <end position="630"/>
    </location>
</feature>
<feature type="helix" evidence="12">
    <location>
        <begin position="634"/>
        <end position="636"/>
    </location>
</feature>
<feature type="helix" evidence="12">
    <location>
        <begin position="638"/>
        <end position="657"/>
    </location>
</feature>
<feature type="helix" evidence="12">
    <location>
        <begin position="662"/>
        <end position="668"/>
    </location>
</feature>
<feature type="strand" evidence="12">
    <location>
        <begin position="672"/>
        <end position="677"/>
    </location>
</feature>
<feature type="helix" evidence="12">
    <location>
        <begin position="685"/>
        <end position="701"/>
    </location>
</feature>
<feature type="helix" evidence="12">
    <location>
        <begin position="705"/>
        <end position="707"/>
    </location>
</feature>
<feature type="strand" evidence="12">
    <location>
        <begin position="710"/>
        <end position="716"/>
    </location>
</feature>
<feature type="helix" evidence="12">
    <location>
        <begin position="721"/>
        <end position="727"/>
    </location>
</feature>
<feature type="helix" evidence="12">
    <location>
        <begin position="728"/>
        <end position="730"/>
    </location>
</feature>
<feature type="strand" evidence="12">
    <location>
        <begin position="732"/>
        <end position="736"/>
    </location>
</feature>
<feature type="helix" evidence="12">
    <location>
        <begin position="747"/>
        <end position="753"/>
    </location>
</feature>
<feature type="turn" evidence="12">
    <location>
        <begin position="754"/>
        <end position="756"/>
    </location>
</feature>
<feature type="strand" evidence="12">
    <location>
        <begin position="758"/>
        <end position="763"/>
    </location>
</feature>
<feature type="helix" evidence="12">
    <location>
        <begin position="766"/>
        <end position="774"/>
    </location>
</feature>
<feature type="helix" evidence="12">
    <location>
        <begin position="776"/>
        <end position="778"/>
    </location>
</feature>
<feature type="strand" evidence="12">
    <location>
        <begin position="779"/>
        <end position="783"/>
    </location>
</feature>
<feature type="helix" evidence="12">
    <location>
        <begin position="786"/>
        <end position="798"/>
    </location>
</feature>
<feature type="helix" evidence="12">
    <location>
        <begin position="805"/>
        <end position="813"/>
    </location>
</feature>
<feature type="turn" evidence="12">
    <location>
        <begin position="824"/>
        <end position="827"/>
    </location>
</feature>
<feature type="helix" evidence="12">
    <location>
        <begin position="828"/>
        <end position="836"/>
    </location>
</feature>
<feature type="turn" evidence="12">
    <location>
        <begin position="838"/>
        <end position="841"/>
    </location>
</feature>
<feature type="helix" evidence="12">
    <location>
        <begin position="843"/>
        <end position="863"/>
    </location>
</feature>
<feature type="helix" evidence="12">
    <location>
        <begin position="865"/>
        <end position="879"/>
    </location>
</feature>
<feature type="helix" evidence="12">
    <location>
        <begin position="880"/>
        <end position="882"/>
    </location>
</feature>
<feature type="helix" evidence="12">
    <location>
        <begin position="884"/>
        <end position="894"/>
    </location>
</feature>
<proteinExistence type="evidence at protein level"/>
<reference key="1">
    <citation type="journal article" date="1986" name="Nature">
        <title>Convergent and divergent evolution of regulatory sites in eukaryotic phosphorylases.</title>
        <authorList>
            <person name="Hwang P.K."/>
            <person name="Fletterick R.J."/>
        </authorList>
    </citation>
    <scope>NUCLEOTIDE SEQUENCE [GENOMIC DNA]</scope>
</reference>
<reference key="2">
    <citation type="journal article" date="1994" name="Yeast">
        <title>DNA sequence analysis of a 10.4 kbp region on the right arm of yeast chromosome XVI positions GPH1 and SGV1 adjacent to KRE6, and identifies two novel tRNA genes.</title>
        <authorList>
            <person name="Roemer T.D."/>
            <person name="Fortin N."/>
            <person name="Bussey H."/>
        </authorList>
    </citation>
    <scope>NUCLEOTIDE SEQUENCE [GENOMIC DNA]</scope>
</reference>
<reference key="3">
    <citation type="journal article" date="1997" name="Nature">
        <title>The nucleotide sequence of Saccharomyces cerevisiae chromosome XVI.</title>
        <authorList>
            <person name="Bussey H."/>
            <person name="Storms R.K."/>
            <person name="Ahmed A."/>
            <person name="Albermann K."/>
            <person name="Allen E."/>
            <person name="Ansorge W."/>
            <person name="Araujo R."/>
            <person name="Aparicio A."/>
            <person name="Barrell B.G."/>
            <person name="Badcock K."/>
            <person name="Benes V."/>
            <person name="Botstein D."/>
            <person name="Bowman S."/>
            <person name="Brueckner M."/>
            <person name="Carpenter J."/>
            <person name="Cherry J.M."/>
            <person name="Chung E."/>
            <person name="Churcher C.M."/>
            <person name="Coster F."/>
            <person name="Davis K."/>
            <person name="Davis R.W."/>
            <person name="Dietrich F.S."/>
            <person name="Delius H."/>
            <person name="DiPaolo T."/>
            <person name="Dubois E."/>
            <person name="Duesterhoeft A."/>
            <person name="Duncan M."/>
            <person name="Floeth M."/>
            <person name="Fortin N."/>
            <person name="Friesen J.D."/>
            <person name="Fritz C."/>
            <person name="Goffeau A."/>
            <person name="Hall J."/>
            <person name="Hebling U."/>
            <person name="Heumann K."/>
            <person name="Hilbert H."/>
            <person name="Hillier L.W."/>
            <person name="Hunicke-Smith S."/>
            <person name="Hyman R.W."/>
            <person name="Johnston M."/>
            <person name="Kalman S."/>
            <person name="Kleine K."/>
            <person name="Komp C."/>
            <person name="Kurdi O."/>
            <person name="Lashkari D."/>
            <person name="Lew H."/>
            <person name="Lin A."/>
            <person name="Lin D."/>
            <person name="Louis E.J."/>
            <person name="Marathe R."/>
            <person name="Messenguy F."/>
            <person name="Mewes H.-W."/>
            <person name="Mirtipati S."/>
            <person name="Moestl D."/>
            <person name="Mueller-Auer S."/>
            <person name="Namath A."/>
            <person name="Nentwich U."/>
            <person name="Oefner P."/>
            <person name="Pearson D."/>
            <person name="Petel F.X."/>
            <person name="Pohl T.M."/>
            <person name="Purnelle B."/>
            <person name="Rajandream M.A."/>
            <person name="Rechmann S."/>
            <person name="Rieger M."/>
            <person name="Riles L."/>
            <person name="Roberts D."/>
            <person name="Schaefer M."/>
            <person name="Scharfe M."/>
            <person name="Scherens B."/>
            <person name="Schramm S."/>
            <person name="Schroeder M."/>
            <person name="Sdicu A.-M."/>
            <person name="Tettelin H."/>
            <person name="Urrestarazu L.A."/>
            <person name="Ushinsky S."/>
            <person name="Vierendeels F."/>
            <person name="Vissers S."/>
            <person name="Voss H."/>
            <person name="Walsh S.V."/>
            <person name="Wambutt R."/>
            <person name="Wang Y."/>
            <person name="Wedler E."/>
            <person name="Wedler H."/>
            <person name="Winnett E."/>
            <person name="Zhong W.-W."/>
            <person name="Zollner A."/>
            <person name="Vo D.H."/>
            <person name="Hani J."/>
        </authorList>
    </citation>
    <scope>NUCLEOTIDE SEQUENCE [LARGE SCALE GENOMIC DNA]</scope>
    <source>
        <strain>ATCC 204508 / S288c</strain>
    </source>
</reference>
<reference key="4">
    <citation type="journal article" date="2014" name="G3 (Bethesda)">
        <title>The reference genome sequence of Saccharomyces cerevisiae: Then and now.</title>
        <authorList>
            <person name="Engel S.R."/>
            <person name="Dietrich F.S."/>
            <person name="Fisk D.G."/>
            <person name="Binkley G."/>
            <person name="Balakrishnan R."/>
            <person name="Costanzo M.C."/>
            <person name="Dwight S.S."/>
            <person name="Hitz B.C."/>
            <person name="Karra K."/>
            <person name="Nash R.S."/>
            <person name="Weng S."/>
            <person name="Wong E.D."/>
            <person name="Lloyd P."/>
            <person name="Skrzypek M.S."/>
            <person name="Miyasato S.R."/>
            <person name="Simison M."/>
            <person name="Cherry J.M."/>
        </authorList>
    </citation>
    <scope>GENOME REANNOTATION</scope>
    <source>
        <strain>ATCC 204508 / S288c</strain>
    </source>
</reference>
<reference key="5">
    <citation type="journal article" date="1992" name="J. Mol. Biol.">
        <title>Purification and crystallization of glycogen phosphorylase from Saccharomyces cerevisiae.</title>
        <authorList>
            <person name="Rath V.L."/>
            <person name="Hwang P.K."/>
            <person name="Fletterick R.J."/>
        </authorList>
    </citation>
    <scope>PROTEIN SEQUENCE OF 2-10</scope>
    <scope>PHOSPHORYLATION AT THR-31</scope>
</reference>
<reference key="6">
    <citation type="journal article" date="1975" name="Biochemistry">
        <title>Amino acid sequence of two functional sites in yeast glycogen phosphorylase.</title>
        <authorList>
            <person name="Lerch K."/>
            <person name="Fischer E.H."/>
        </authorList>
    </citation>
    <scope>PROTEIN SEQUENCE OF 30-37 AND 737-754</scope>
    <scope>PHOSPHORYLATION AT THR-31</scope>
    <scope>PYRIDOXAL PHOSPHATE AT LYS-751</scope>
</reference>
<reference key="7">
    <citation type="journal article" date="1983" name="Arch. Biochem. Biophys.">
        <title>Purification and properties of phosphorylase from baker's yeast.</title>
        <authorList>
            <person name="Becker J.U."/>
            <person name="Wingender-Drissen R."/>
            <person name="Schiltz E."/>
        </authorList>
    </citation>
    <scope>SUBUNIT</scope>
</reference>
<reference key="8">
    <citation type="journal article" date="2005" name="Mol. Cell. Proteomics">
        <title>Quantitative phosphoproteomics applied to the yeast pheromone signaling pathway.</title>
        <authorList>
            <person name="Gruhler A."/>
            <person name="Olsen J.V."/>
            <person name="Mohammed S."/>
            <person name="Mortensen P."/>
            <person name="Faergeman N.J."/>
            <person name="Mann M."/>
            <person name="Jensen O.N."/>
        </authorList>
    </citation>
    <scope>PHOSPHORYLATION [LARGE SCALE ANALYSIS] AT THR-31</scope>
    <scope>IDENTIFICATION BY MASS SPECTROMETRY [LARGE SCALE ANALYSIS]</scope>
    <source>
        <strain>YAL6B</strain>
    </source>
</reference>
<reference key="9">
    <citation type="journal article" date="2007" name="J. Proteome Res.">
        <title>Large-scale phosphorylation analysis of alpha-factor-arrested Saccharomyces cerevisiae.</title>
        <authorList>
            <person name="Li X."/>
            <person name="Gerber S.A."/>
            <person name="Rudner A.D."/>
            <person name="Beausoleil S.A."/>
            <person name="Haas W."/>
            <person name="Villen J."/>
            <person name="Elias J.E."/>
            <person name="Gygi S.P."/>
        </authorList>
    </citation>
    <scope>PHOSPHORYLATION [LARGE SCALE ANALYSIS] AT THR-31</scope>
    <scope>IDENTIFICATION BY MASS SPECTROMETRY [LARGE SCALE ANALYSIS]</scope>
    <source>
        <strain>ADR376</strain>
    </source>
</reference>
<reference key="10">
    <citation type="journal article" date="2008" name="Mol. Cell. Proteomics">
        <title>A multidimensional chromatography technology for in-depth phosphoproteome analysis.</title>
        <authorList>
            <person name="Albuquerque C.P."/>
            <person name="Smolka M.B."/>
            <person name="Payne S.H."/>
            <person name="Bafna V."/>
            <person name="Eng J."/>
            <person name="Zhou H."/>
        </authorList>
    </citation>
    <scope>PHOSPHORYLATION [LARGE SCALE ANALYSIS] AT THR-31 AND SER-333</scope>
    <scope>IDENTIFICATION BY MASS SPECTROMETRY [LARGE SCALE ANALYSIS]</scope>
</reference>
<reference key="11">
    <citation type="journal article" date="2009" name="Science">
        <title>Global analysis of Cdk1 substrate phosphorylation sites provides insights into evolution.</title>
        <authorList>
            <person name="Holt L.J."/>
            <person name="Tuch B.B."/>
            <person name="Villen J."/>
            <person name="Johnson A.D."/>
            <person name="Gygi S.P."/>
            <person name="Morgan D.O."/>
        </authorList>
    </citation>
    <scope>PHOSPHORYLATION [LARGE SCALE ANALYSIS] AT THR-31 AND SER-333</scope>
    <scope>IDENTIFICATION BY MASS SPECTROMETRY [LARGE SCALE ANALYSIS]</scope>
</reference>
<reference key="12">
    <citation type="journal article" date="2012" name="Proc. Natl. Acad. Sci. U.S.A.">
        <title>N-terminal acetylome analyses and functional insights of the N-terminal acetyltransferase NatB.</title>
        <authorList>
            <person name="Van Damme P."/>
            <person name="Lasa M."/>
            <person name="Polevoda B."/>
            <person name="Gazquez C."/>
            <person name="Elosegui-Artola A."/>
            <person name="Kim D.S."/>
            <person name="De Juan-Pardo E."/>
            <person name="Demeyer K."/>
            <person name="Hole K."/>
            <person name="Larrea E."/>
            <person name="Timmerman E."/>
            <person name="Prieto J."/>
            <person name="Arnesen T."/>
            <person name="Sherman F."/>
            <person name="Gevaert K."/>
            <person name="Aldabe R."/>
        </authorList>
    </citation>
    <scope>IDENTIFICATION BY MASS SPECTROMETRY [LARGE SCALE ANALYSIS]</scope>
</reference>
<reference key="13">
    <citation type="journal article" date="2013" name="PLoS ONE">
        <title>Transcriptional response to deletion of the phosphatidylserine decarboxylase Psd1p in the yeast Saccharomyces cerevisiae.</title>
        <authorList>
            <person name="Gsell M."/>
            <person name="Mascher G."/>
            <person name="Schuiki I."/>
            <person name="Ploier B."/>
            <person name="Hrastnik C."/>
            <person name="Daum G."/>
        </authorList>
    </citation>
    <scope>SUBCELLULAR LOCATION</scope>
    <scope>DISRUPTION PHENOTYPE</scope>
</reference>
<reference key="14">
    <citation type="journal article" date="2024" name="IScience">
        <title>Atg45 is an autophagy receptor for glycogen, a non-preferred cargo of bulk autophagy in yeast.</title>
        <authorList>
            <person name="Isoda T."/>
            <person name="Takeda E."/>
            <person name="Hosokawa S."/>
            <person name="Hotta-Ren S."/>
            <person name="Ohsumi Y."/>
        </authorList>
    </citation>
    <scope>SUBCELLULAR LOCATION</scope>
</reference>
<reference key="15">
    <citation type="journal article" date="1996" name="Science">
        <title>A protein phosphorylation switch at the conserved allosteric site in GP.</title>
        <authorList>
            <person name="Lin K."/>
            <person name="Rath V.L."/>
            <person name="Dai S.C."/>
            <person name="Fletterick R.J."/>
            <person name="Hwang P.K."/>
        </authorList>
    </citation>
    <scope>X-RAY CRYSTALLOGRAPHY (2.8 ANGSTROMS) OF 14-901</scope>
</reference>
<accession>P06738</accession>
<accession>D6W4G1</accession>
<protein>
    <recommendedName>
        <fullName>Glycogen phosphorylase</fullName>
        <ecNumber>2.4.1.1</ecNumber>
    </recommendedName>
</protein>
<keyword id="KW-0002">3D-structure</keyword>
<keyword id="KW-0119">Carbohydrate metabolism</keyword>
<keyword id="KW-0963">Cytoplasm</keyword>
<keyword id="KW-0903">Direct protein sequencing</keyword>
<keyword id="KW-0321">Glycogen metabolism</keyword>
<keyword id="KW-0328">Glycosyltransferase</keyword>
<keyword id="KW-0597">Phosphoprotein</keyword>
<keyword id="KW-0663">Pyridoxal phosphate</keyword>
<keyword id="KW-1185">Reference proteome</keyword>
<keyword id="KW-0808">Transferase</keyword>
<gene>
    <name type="primary">GPH1</name>
    <name type="ordered locus">YPR160W</name>
    <name type="ORF">P9584.1</name>
</gene>
<comment type="function">
    <text>Phosphorylase is an important allosteric enzyme in carbohydrate metabolism. Enzymes from different sources differ in their regulatory mechanisms and in their natural substrates. However, all known phosphorylases share catalytic and structural properties.</text>
</comment>
<comment type="catalytic activity">
    <reaction>
        <text>[(1-&gt;4)-alpha-D-glucosyl](n) + phosphate = [(1-&gt;4)-alpha-D-glucosyl](n-1) + alpha-D-glucose 1-phosphate</text>
        <dbReference type="Rhea" id="RHEA:41732"/>
        <dbReference type="Rhea" id="RHEA-COMP:9584"/>
        <dbReference type="Rhea" id="RHEA-COMP:9586"/>
        <dbReference type="ChEBI" id="CHEBI:15444"/>
        <dbReference type="ChEBI" id="CHEBI:43474"/>
        <dbReference type="ChEBI" id="CHEBI:58601"/>
        <dbReference type="EC" id="2.4.1.1"/>
    </reaction>
</comment>
<comment type="cofactor">
    <cofactor>
        <name>pyridoxal 5'-phosphate</name>
        <dbReference type="ChEBI" id="CHEBI:597326"/>
    </cofactor>
</comment>
<comment type="activity regulation">
    <text>Activated by phosphorylation of Thr-31.</text>
</comment>
<comment type="subunit">
    <text evidence="6">Homodimer.</text>
</comment>
<comment type="interaction">
    <interactant intactId="EBI-13389">
        <id>P06738</id>
    </interactant>
    <interactant intactId="EBI-701">
        <id>P33203</id>
        <label>PRP40</label>
    </interactant>
    <organismsDiffer>false</organismsDiffer>
    <experiments>2</experiments>
</comment>
<comment type="interaction">
    <interactant intactId="EBI-13389">
        <id>P06738</id>
    </interactant>
    <interactant intactId="EBI-16219">
        <id>P39940</id>
        <label>RSP5</label>
    </interactant>
    <organismsDiffer>false</organismsDiffer>
    <experiments>2</experiments>
</comment>
<comment type="subcellular location">
    <subcellularLocation>
        <location evidence="4 5">Cytoplasm</location>
        <location evidence="4 5">Cytosol</location>
    </subcellularLocation>
</comment>
<comment type="disruption phenotype">
    <text evidence="4">Decreases cellular phosphatidylcholine levels (PubMed:24146988). Growth on non-fermentable carbon sources is severely decreased (lactate or glycerol) (PubMed:24146988). Sensitive to sodium dodecyl sulfate, and sorbitol (PubMed:24146988).</text>
</comment>
<comment type="similarity">
    <text evidence="7">Belongs to the glycogen phosphorylase family.</text>
</comment>
<comment type="sequence caution" evidence="7">
    <conflict type="erroneous initiation">
        <sequence resource="EMBL-CDS" id="CAA28273"/>
    </conflict>
    <text>Truncated N-terminus.</text>
</comment>
<evidence type="ECO:0000256" key="1">
    <source>
        <dbReference type="SAM" id="MobiDB-lite"/>
    </source>
</evidence>
<evidence type="ECO:0000269" key="2">
    <source>
    </source>
</evidence>
<evidence type="ECO:0000269" key="3">
    <source>
    </source>
</evidence>
<evidence type="ECO:0000269" key="4">
    <source>
    </source>
</evidence>
<evidence type="ECO:0000269" key="5">
    <source>
    </source>
</evidence>
<evidence type="ECO:0000269" key="6">
    <source>
    </source>
</evidence>
<evidence type="ECO:0000305" key="7"/>
<evidence type="ECO:0007744" key="8">
    <source>
    </source>
</evidence>
<evidence type="ECO:0007744" key="9">
    <source>
    </source>
</evidence>
<evidence type="ECO:0007744" key="10">
    <source>
    </source>
</evidence>
<evidence type="ECO:0007744" key="11">
    <source>
    </source>
</evidence>
<evidence type="ECO:0007829" key="12">
    <source>
        <dbReference type="PDB" id="1YGP"/>
    </source>
</evidence>
<sequence>MPPASTSTTNDMITEEPTSPHQIPRLTRRLTGFLPQEIKSIDTMIPLKSRALWNKHQVKKFNKAEDFQDRFIDHVETTLARSLYNCDDMAAYEAASMSIRDNLVIDWNKTQQKFTTRDPKRVYYLSLEFLMGRALDNALINMKIEDPEDPAASKGKPREMIKGALDDLGFKLEDVLDQEPDAGLGNGGLGRLAACFVDSMATEGIPAWGYGLRYEYGIFAQKIIDGYQVETPDYWLNSGNPWEIERNEVQIPVTFYGYVDRPEGGKTTLSASQWIGGERVLAVAYDFPVPGFKTSNVNNLRLWQARPTTEFDFAKFNNGDYKNSVAQQQRAESITAVLYPNDNFAQGKELRLKQQYFWCAASLHDILRRFKKSKRPWTEFPDQVAIQLNDTHPTLAIVELQRVLVDLEKLDWHEAWDIVTKTFAYTNHTVMQEALEKWPVGLFGHLLPRHLEIIYDINWFFLQDVAKKFPKDVDLLSRISIIEENSPERQIRMAFLAIVGSHKVNGVAELHSELIKTTIFKDFVKFYGPSKFVNVTNGITPRRWLKQANPSLAKLISETLNDPTEEYLLDMAKLTQLGKYVEDKEFLKKWNQVKLNNKIRLVDLIKKENDGVDIINREYLDDTLFDMQVKRIHEYKRQQLNVFGIIYRYLAMKNMLKNGASIEEVAKKYPRKVSIFGGKSAPGYYMAKLIIKLINCVADIVNNDESIEHLLKVVFVADYNVSKAEIIIPASDLSEHISTAGTEASGTSNMKFVMNGGLIIGTVDGANVEITREIGEDNVFLFGNLSENVEELRYNHQYHPQDLPSSLDSVLSYIESGQFSPENPNEFKPLVDSIKYHGDYYLVSDDFESYLATHELVDQEFHNQRSEWLKKSVLSVANVGFFSSDRCIEEYSDTIWNVEPVT</sequence>
<dbReference type="EC" id="2.4.1.1"/>
<dbReference type="EMBL" id="X04604">
    <property type="protein sequence ID" value="CAA28273.1"/>
    <property type="status" value="ALT_INIT"/>
    <property type="molecule type" value="Genomic_DNA"/>
</dbReference>
<dbReference type="EMBL" id="L33835">
    <property type="protein sequence ID" value="AAB59313.1"/>
    <property type="molecule type" value="Genomic_DNA"/>
</dbReference>
<dbReference type="EMBL" id="U28371">
    <property type="protein sequence ID" value="AAB68057.1"/>
    <property type="molecule type" value="Genomic_DNA"/>
</dbReference>
<dbReference type="EMBL" id="BK006949">
    <property type="protein sequence ID" value="DAA11577.1"/>
    <property type="molecule type" value="Genomic_DNA"/>
</dbReference>
<dbReference type="PIR" id="S61144">
    <property type="entry name" value="S61144"/>
</dbReference>
<dbReference type="RefSeq" id="NP_015486.1">
    <property type="nucleotide sequence ID" value="NM_001184257.1"/>
</dbReference>
<dbReference type="PDB" id="1YGP">
    <property type="method" value="X-ray"/>
    <property type="resolution" value="2.80 A"/>
    <property type="chains" value="A/B=24-902"/>
</dbReference>
<dbReference type="PDBsum" id="1YGP"/>
<dbReference type="SMR" id="P06738"/>
<dbReference type="BioGRID" id="36333">
    <property type="interactions" value="301"/>
</dbReference>
<dbReference type="DIP" id="DIP-2648N"/>
<dbReference type="FunCoup" id="P06738">
    <property type="interactions" value="1096"/>
</dbReference>
<dbReference type="IntAct" id="P06738">
    <property type="interactions" value="32"/>
</dbReference>
<dbReference type="MINT" id="P06738"/>
<dbReference type="STRING" id="4932.YPR160W"/>
<dbReference type="CAZy" id="GT35">
    <property type="family name" value="Glycosyltransferase Family 35"/>
</dbReference>
<dbReference type="iPTMnet" id="P06738"/>
<dbReference type="PaxDb" id="4932-YPR160W"/>
<dbReference type="PeptideAtlas" id="P06738"/>
<dbReference type="EnsemblFungi" id="YPR160W_mRNA">
    <property type="protein sequence ID" value="YPR160W"/>
    <property type="gene ID" value="YPR160W"/>
</dbReference>
<dbReference type="GeneID" id="856289"/>
<dbReference type="KEGG" id="sce:YPR160W"/>
<dbReference type="AGR" id="SGD:S000006364"/>
<dbReference type="SGD" id="S000006364">
    <property type="gene designation" value="GPH1"/>
</dbReference>
<dbReference type="VEuPathDB" id="FungiDB:YPR160W"/>
<dbReference type="eggNOG" id="KOG2099">
    <property type="taxonomic scope" value="Eukaryota"/>
</dbReference>
<dbReference type="GeneTree" id="ENSGT00950000183148"/>
<dbReference type="HOGENOM" id="CLU_010198_1_0_1"/>
<dbReference type="InParanoid" id="P06738"/>
<dbReference type="OMA" id="WLKQANP"/>
<dbReference type="OrthoDB" id="9215500at2759"/>
<dbReference type="BioCyc" id="MetaCyc:YPR160W-MONOMER"/>
<dbReference type="BioCyc" id="YEAST:YPR160W-MONOMER"/>
<dbReference type="Reactome" id="R-SCE-6798695">
    <property type="pathway name" value="Neutrophil degranulation"/>
</dbReference>
<dbReference type="Reactome" id="R-SCE-70221">
    <property type="pathway name" value="Glycogen breakdown (glycogenolysis)"/>
</dbReference>
<dbReference type="BioGRID-ORCS" id="856289">
    <property type="hits" value="0 hits in 10 CRISPR screens"/>
</dbReference>
<dbReference type="EvolutionaryTrace" id="P06738"/>
<dbReference type="PRO" id="PR:P06738"/>
<dbReference type="Proteomes" id="UP000002311">
    <property type="component" value="Chromosome XVI"/>
</dbReference>
<dbReference type="RNAct" id="P06738">
    <property type="molecule type" value="protein"/>
</dbReference>
<dbReference type="GO" id="GO:0005737">
    <property type="term" value="C:cytoplasm"/>
    <property type="evidence" value="ECO:0000314"/>
    <property type="project" value="SGD"/>
</dbReference>
<dbReference type="GO" id="GO:0005829">
    <property type="term" value="C:cytosol"/>
    <property type="evidence" value="ECO:0007669"/>
    <property type="project" value="UniProtKB-SubCell"/>
</dbReference>
<dbReference type="GO" id="GO:0008184">
    <property type="term" value="F:glycogen phosphorylase activity"/>
    <property type="evidence" value="ECO:0000314"/>
    <property type="project" value="SGD"/>
</dbReference>
<dbReference type="GO" id="GO:0030170">
    <property type="term" value="F:pyridoxal phosphate binding"/>
    <property type="evidence" value="ECO:0000318"/>
    <property type="project" value="GO_Central"/>
</dbReference>
<dbReference type="GO" id="GO:0005980">
    <property type="term" value="P:glycogen catabolic process"/>
    <property type="evidence" value="ECO:0000315"/>
    <property type="project" value="SGD"/>
</dbReference>
<dbReference type="CDD" id="cd04300">
    <property type="entry name" value="GT35_Glycogen_Phosphorylase"/>
    <property type="match status" value="1"/>
</dbReference>
<dbReference type="FunFam" id="3.40.50.2000:FF:000002">
    <property type="entry name" value="Alpha-1,4 glucan phosphorylase"/>
    <property type="match status" value="1"/>
</dbReference>
<dbReference type="Gene3D" id="3.40.50.2000">
    <property type="entry name" value="Glycogen Phosphorylase B"/>
    <property type="match status" value="2"/>
</dbReference>
<dbReference type="InterPro" id="IPR011833">
    <property type="entry name" value="Glycg_phsphrylas"/>
</dbReference>
<dbReference type="InterPro" id="IPR000811">
    <property type="entry name" value="Glyco_trans_35"/>
</dbReference>
<dbReference type="InterPro" id="IPR035090">
    <property type="entry name" value="Pyridoxal_P_attach_site"/>
</dbReference>
<dbReference type="NCBIfam" id="TIGR02093">
    <property type="entry name" value="P_ylase"/>
    <property type="match status" value="1"/>
</dbReference>
<dbReference type="PANTHER" id="PTHR11468">
    <property type="entry name" value="GLYCOGEN PHOSPHORYLASE"/>
    <property type="match status" value="1"/>
</dbReference>
<dbReference type="PANTHER" id="PTHR11468:SF3">
    <property type="entry name" value="GLYCOGEN PHOSPHORYLASE, LIVER FORM"/>
    <property type="match status" value="1"/>
</dbReference>
<dbReference type="Pfam" id="PF00343">
    <property type="entry name" value="Phosphorylase"/>
    <property type="match status" value="1"/>
</dbReference>
<dbReference type="PIRSF" id="PIRSF000460">
    <property type="entry name" value="Pprylas_GlgP"/>
    <property type="match status" value="1"/>
</dbReference>
<dbReference type="SUPFAM" id="SSF53756">
    <property type="entry name" value="UDP-Glycosyltransferase/glycogen phosphorylase"/>
    <property type="match status" value="1"/>
</dbReference>
<dbReference type="PROSITE" id="PS00102">
    <property type="entry name" value="PHOSPHORYLASE"/>
    <property type="match status" value="1"/>
</dbReference>